<sequence length="767" mass="85067">MVGPFKKILHAHNQRFPPSSSSSLDPVVDDSSRKQTRIILSYLLHLSLSLHITYSLCLLHFFFGSSNPFSPMEESNNSAVVDFPDNFMDQLLWEECWEEEATQHDQALSSPSGLKERVACAMGHLQEVMGERELLIQLWVPVETRSGRVLSTEEQPYSINTFSQSQSLALYRDASAGYSFAAEVGSEQLVGLPGRVFLRRMPEWTPDVRFFRKEEYPRIGYARRYQVRATLALPLFQGTSGNCVAVMEMVTTHRNLEYASQLSTICHALEAFDLRTSQTSIVPASLKVTSSSSSSSRTEVASILQGICSSHGLPLAVTWGHQDSSSCLSALISASYAADHGSRCFLAACSEHHLLGGEGIAGRAFATKKQCFATDVAIFSKWSYPLSHYAKMFDLHAALAVPILTRGNRTVQFVLELFFPRDCLDIQTHSLTLASQLKLRFQSSPHLMVDDNQIAEEVRDAATPPLTQEDPKGKQVSFSFSSASSLENRKRKTKAEKDITLDTLRQHFAGSLKDAAKNIGVCPTTLKRICRQNGISRWPSRKIKKVGHSLRKLQVVMDSVEGVQGSLHLASFYSSFPQLQSSSSSSFPFINPTQTVHVPPKSPPSSSGSQSSSGSSTCCSSEEQQLGGFQKPALSHPQLLTLSSMHEDQRPVRVTSSLPPLPSATTPRKAKDGMKVKAMFGDSMLRMSLLPHSRLTDLRREIAKRFGMDDVLRSNFSLKYLDDDQEWVLLTCDADLEECIQVYKSSSLKETIRILVHHPLSRPSFGS</sequence>
<evidence type="ECO:0000250" key="1"/>
<evidence type="ECO:0000255" key="2"/>
<evidence type="ECO:0000255" key="3">
    <source>
        <dbReference type="PROSITE-ProRule" id="PRU00852"/>
    </source>
</evidence>
<evidence type="ECO:0000255" key="4">
    <source>
        <dbReference type="PROSITE-ProRule" id="PRU01081"/>
    </source>
</evidence>
<evidence type="ECO:0000256" key="5">
    <source>
        <dbReference type="SAM" id="MobiDB-lite"/>
    </source>
</evidence>
<evidence type="ECO:0000269" key="6">
    <source>
    </source>
</evidence>
<gene>
    <name type="primary">NLP3</name>
    <name type="ordered locus">At4g38340</name>
    <name type="ORF">F22I13.110</name>
</gene>
<proteinExistence type="evidence at transcript level"/>
<dbReference type="EMBL" id="AL035539">
    <property type="protein sequence ID" value="CAB37490.1"/>
    <property type="molecule type" value="Genomic_DNA"/>
</dbReference>
<dbReference type="EMBL" id="AL161593">
    <property type="protein sequence ID" value="CAB80499.1"/>
    <property type="molecule type" value="Genomic_DNA"/>
</dbReference>
<dbReference type="EMBL" id="CP002687">
    <property type="protein sequence ID" value="AEE86915.1"/>
    <property type="molecule type" value="Genomic_DNA"/>
</dbReference>
<dbReference type="PIR" id="T05662">
    <property type="entry name" value="T05662"/>
</dbReference>
<dbReference type="RefSeq" id="NP_195547.1">
    <property type="nucleotide sequence ID" value="NM_119996.2"/>
</dbReference>
<dbReference type="SMR" id="Q9SVF1"/>
<dbReference type="STRING" id="3702.Q9SVF1"/>
<dbReference type="PaxDb" id="3702-AT4G38340.1"/>
<dbReference type="EnsemblPlants" id="AT4G38340.1">
    <property type="protein sequence ID" value="AT4G38340.1"/>
    <property type="gene ID" value="AT4G38340"/>
</dbReference>
<dbReference type="GeneID" id="829991"/>
<dbReference type="Gramene" id="AT4G38340.1">
    <property type="protein sequence ID" value="AT4G38340.1"/>
    <property type="gene ID" value="AT4G38340"/>
</dbReference>
<dbReference type="KEGG" id="ath:AT4G38340"/>
<dbReference type="Araport" id="AT4G38340"/>
<dbReference type="TAIR" id="AT4G38340">
    <property type="gene designation" value="NLP3"/>
</dbReference>
<dbReference type="eggNOG" id="ENOG502QQ6H">
    <property type="taxonomic scope" value="Eukaryota"/>
</dbReference>
<dbReference type="HOGENOM" id="CLU_008971_0_0_1"/>
<dbReference type="InParanoid" id="Q9SVF1"/>
<dbReference type="PhylomeDB" id="Q9SVF1"/>
<dbReference type="PRO" id="PR:Q9SVF1"/>
<dbReference type="Proteomes" id="UP000006548">
    <property type="component" value="Chromosome 4"/>
</dbReference>
<dbReference type="ExpressionAtlas" id="Q9SVF1">
    <property type="expression patterns" value="baseline and differential"/>
</dbReference>
<dbReference type="GO" id="GO:0005634">
    <property type="term" value="C:nucleus"/>
    <property type="evidence" value="ECO:0007669"/>
    <property type="project" value="UniProtKB-SubCell"/>
</dbReference>
<dbReference type="GO" id="GO:0003677">
    <property type="term" value="F:DNA binding"/>
    <property type="evidence" value="ECO:0007669"/>
    <property type="project" value="UniProtKB-KW"/>
</dbReference>
<dbReference type="GO" id="GO:0003700">
    <property type="term" value="F:DNA-binding transcription factor activity"/>
    <property type="evidence" value="ECO:0000250"/>
    <property type="project" value="TAIR"/>
</dbReference>
<dbReference type="GO" id="GO:0006355">
    <property type="term" value="P:regulation of DNA-templated transcription"/>
    <property type="evidence" value="ECO:0000304"/>
    <property type="project" value="TAIR"/>
</dbReference>
<dbReference type="CDD" id="cd06407">
    <property type="entry name" value="PB1_NLP"/>
    <property type="match status" value="1"/>
</dbReference>
<dbReference type="Gene3D" id="3.10.20.90">
    <property type="entry name" value="Phosphatidylinositol 3-kinase Catalytic Subunit, Chain A, domain 1"/>
    <property type="match status" value="1"/>
</dbReference>
<dbReference type="InterPro" id="IPR045012">
    <property type="entry name" value="NLP"/>
</dbReference>
<dbReference type="InterPro" id="IPR055081">
    <property type="entry name" value="NLP1-9_GAF"/>
</dbReference>
<dbReference type="InterPro" id="IPR053793">
    <property type="entry name" value="PB1-like"/>
</dbReference>
<dbReference type="InterPro" id="IPR000270">
    <property type="entry name" value="PB1_dom"/>
</dbReference>
<dbReference type="InterPro" id="IPR034891">
    <property type="entry name" value="PB1_NLP"/>
</dbReference>
<dbReference type="InterPro" id="IPR003035">
    <property type="entry name" value="RWP-RK_dom"/>
</dbReference>
<dbReference type="PANTHER" id="PTHR32002:SF31">
    <property type="entry name" value="PROTEIN NLP3"/>
    <property type="match status" value="1"/>
</dbReference>
<dbReference type="PANTHER" id="PTHR32002">
    <property type="entry name" value="PROTEIN NLP8"/>
    <property type="match status" value="1"/>
</dbReference>
<dbReference type="Pfam" id="PF22922">
    <property type="entry name" value="GAF_NLP"/>
    <property type="match status" value="2"/>
</dbReference>
<dbReference type="Pfam" id="PF00564">
    <property type="entry name" value="PB1"/>
    <property type="match status" value="1"/>
</dbReference>
<dbReference type="Pfam" id="PF02042">
    <property type="entry name" value="RWP-RK"/>
    <property type="match status" value="1"/>
</dbReference>
<dbReference type="SMART" id="SM00666">
    <property type="entry name" value="PB1"/>
    <property type="match status" value="1"/>
</dbReference>
<dbReference type="SUPFAM" id="SSF54277">
    <property type="entry name" value="CAD &amp; PB1 domains"/>
    <property type="match status" value="1"/>
</dbReference>
<dbReference type="SUPFAM" id="SSF55781">
    <property type="entry name" value="GAF domain-like"/>
    <property type="match status" value="1"/>
</dbReference>
<dbReference type="PROSITE" id="PS51745">
    <property type="entry name" value="PB1"/>
    <property type="match status" value="1"/>
</dbReference>
<dbReference type="PROSITE" id="PS51519">
    <property type="entry name" value="RWP_RK"/>
    <property type="match status" value="1"/>
</dbReference>
<accession>Q9SVF1</accession>
<keyword id="KW-0175">Coiled coil</keyword>
<keyword id="KW-0238">DNA-binding</keyword>
<keyword id="KW-0539">Nucleus</keyword>
<keyword id="KW-1185">Reference proteome</keyword>
<keyword id="KW-0804">Transcription</keyword>
<keyword id="KW-0805">Transcription regulation</keyword>
<organism>
    <name type="scientific">Arabidopsis thaliana</name>
    <name type="common">Mouse-ear cress</name>
    <dbReference type="NCBI Taxonomy" id="3702"/>
    <lineage>
        <taxon>Eukaryota</taxon>
        <taxon>Viridiplantae</taxon>
        <taxon>Streptophyta</taxon>
        <taxon>Embryophyta</taxon>
        <taxon>Tracheophyta</taxon>
        <taxon>Spermatophyta</taxon>
        <taxon>Magnoliopsida</taxon>
        <taxon>eudicotyledons</taxon>
        <taxon>Gunneridae</taxon>
        <taxon>Pentapetalae</taxon>
        <taxon>rosids</taxon>
        <taxon>malvids</taxon>
        <taxon>Brassicales</taxon>
        <taxon>Brassicaceae</taxon>
        <taxon>Camelineae</taxon>
        <taxon>Arabidopsis</taxon>
    </lineage>
</organism>
<reference key="1">
    <citation type="journal article" date="1999" name="Nature">
        <title>Sequence and analysis of chromosome 4 of the plant Arabidopsis thaliana.</title>
        <authorList>
            <person name="Mayer K.F.X."/>
            <person name="Schueller C."/>
            <person name="Wambutt R."/>
            <person name="Murphy G."/>
            <person name="Volckaert G."/>
            <person name="Pohl T."/>
            <person name="Duesterhoeft A."/>
            <person name="Stiekema W."/>
            <person name="Entian K.-D."/>
            <person name="Terryn N."/>
            <person name="Harris B."/>
            <person name="Ansorge W."/>
            <person name="Brandt P."/>
            <person name="Grivell L.A."/>
            <person name="Rieger M."/>
            <person name="Weichselgartner M."/>
            <person name="de Simone V."/>
            <person name="Obermaier B."/>
            <person name="Mache R."/>
            <person name="Mueller M."/>
            <person name="Kreis M."/>
            <person name="Delseny M."/>
            <person name="Puigdomenech P."/>
            <person name="Watson M."/>
            <person name="Schmidtheini T."/>
            <person name="Reichert B."/>
            <person name="Portetelle D."/>
            <person name="Perez-Alonso M."/>
            <person name="Boutry M."/>
            <person name="Bancroft I."/>
            <person name="Vos P."/>
            <person name="Hoheisel J."/>
            <person name="Zimmermann W."/>
            <person name="Wedler H."/>
            <person name="Ridley P."/>
            <person name="Langham S.-A."/>
            <person name="McCullagh B."/>
            <person name="Bilham L."/>
            <person name="Robben J."/>
            <person name="van der Schueren J."/>
            <person name="Grymonprez B."/>
            <person name="Chuang Y.-J."/>
            <person name="Vandenbussche F."/>
            <person name="Braeken M."/>
            <person name="Weltjens I."/>
            <person name="Voet M."/>
            <person name="Bastiaens I."/>
            <person name="Aert R."/>
            <person name="Defoor E."/>
            <person name="Weitzenegger T."/>
            <person name="Bothe G."/>
            <person name="Ramsperger U."/>
            <person name="Hilbert H."/>
            <person name="Braun M."/>
            <person name="Holzer E."/>
            <person name="Brandt A."/>
            <person name="Peters S."/>
            <person name="van Staveren M."/>
            <person name="Dirkse W."/>
            <person name="Mooijman P."/>
            <person name="Klein Lankhorst R."/>
            <person name="Rose M."/>
            <person name="Hauf J."/>
            <person name="Koetter P."/>
            <person name="Berneiser S."/>
            <person name="Hempel S."/>
            <person name="Feldpausch M."/>
            <person name="Lamberth S."/>
            <person name="Van den Daele H."/>
            <person name="De Keyser A."/>
            <person name="Buysshaert C."/>
            <person name="Gielen J."/>
            <person name="Villarroel R."/>
            <person name="De Clercq R."/>
            <person name="van Montagu M."/>
            <person name="Rogers J."/>
            <person name="Cronin A."/>
            <person name="Quail M.A."/>
            <person name="Bray-Allen S."/>
            <person name="Clark L."/>
            <person name="Doggett J."/>
            <person name="Hall S."/>
            <person name="Kay M."/>
            <person name="Lennard N."/>
            <person name="McLay K."/>
            <person name="Mayes R."/>
            <person name="Pettett A."/>
            <person name="Rajandream M.A."/>
            <person name="Lyne M."/>
            <person name="Benes V."/>
            <person name="Rechmann S."/>
            <person name="Borkova D."/>
            <person name="Bloecker H."/>
            <person name="Scharfe M."/>
            <person name="Grimm M."/>
            <person name="Loehnert T.-H."/>
            <person name="Dose S."/>
            <person name="de Haan M."/>
            <person name="Maarse A.C."/>
            <person name="Schaefer M."/>
            <person name="Mueller-Auer S."/>
            <person name="Gabel C."/>
            <person name="Fuchs M."/>
            <person name="Fartmann B."/>
            <person name="Granderath K."/>
            <person name="Dauner D."/>
            <person name="Herzl A."/>
            <person name="Neumann S."/>
            <person name="Argiriou A."/>
            <person name="Vitale D."/>
            <person name="Liguori R."/>
            <person name="Piravandi E."/>
            <person name="Massenet O."/>
            <person name="Quigley F."/>
            <person name="Clabauld G."/>
            <person name="Muendlein A."/>
            <person name="Felber R."/>
            <person name="Schnabl S."/>
            <person name="Hiller R."/>
            <person name="Schmidt W."/>
            <person name="Lecharny A."/>
            <person name="Aubourg S."/>
            <person name="Chefdor F."/>
            <person name="Cooke R."/>
            <person name="Berger C."/>
            <person name="Monfort A."/>
            <person name="Casacuberta E."/>
            <person name="Gibbons T."/>
            <person name="Weber N."/>
            <person name="Vandenbol M."/>
            <person name="Bargues M."/>
            <person name="Terol J."/>
            <person name="Torres A."/>
            <person name="Perez-Perez A."/>
            <person name="Purnelle B."/>
            <person name="Bent E."/>
            <person name="Johnson S."/>
            <person name="Tacon D."/>
            <person name="Jesse T."/>
            <person name="Heijnen L."/>
            <person name="Schwarz S."/>
            <person name="Scholler P."/>
            <person name="Heber S."/>
            <person name="Francs P."/>
            <person name="Bielke C."/>
            <person name="Frishman D."/>
            <person name="Haase D."/>
            <person name="Lemcke K."/>
            <person name="Mewes H.-W."/>
            <person name="Stocker S."/>
            <person name="Zaccaria P."/>
            <person name="Bevan M."/>
            <person name="Wilson R.K."/>
            <person name="de la Bastide M."/>
            <person name="Habermann K."/>
            <person name="Parnell L."/>
            <person name="Dedhia N."/>
            <person name="Gnoj L."/>
            <person name="Schutz K."/>
            <person name="Huang E."/>
            <person name="Spiegel L."/>
            <person name="Sekhon M."/>
            <person name="Murray J."/>
            <person name="Sheet P."/>
            <person name="Cordes M."/>
            <person name="Abu-Threideh J."/>
            <person name="Stoneking T."/>
            <person name="Kalicki J."/>
            <person name="Graves T."/>
            <person name="Harmon G."/>
            <person name="Edwards J."/>
            <person name="Latreille P."/>
            <person name="Courtney L."/>
            <person name="Cloud J."/>
            <person name="Abbott A."/>
            <person name="Scott K."/>
            <person name="Johnson D."/>
            <person name="Minx P."/>
            <person name="Bentley D."/>
            <person name="Fulton B."/>
            <person name="Miller N."/>
            <person name="Greco T."/>
            <person name="Kemp K."/>
            <person name="Kramer J."/>
            <person name="Fulton L."/>
            <person name="Mardis E."/>
            <person name="Dante M."/>
            <person name="Pepin K."/>
            <person name="Hillier L.W."/>
            <person name="Nelson J."/>
            <person name="Spieth J."/>
            <person name="Ryan E."/>
            <person name="Andrews S."/>
            <person name="Geisel C."/>
            <person name="Layman D."/>
            <person name="Du H."/>
            <person name="Ali J."/>
            <person name="Berghoff A."/>
            <person name="Jones K."/>
            <person name="Drone K."/>
            <person name="Cotton M."/>
            <person name="Joshu C."/>
            <person name="Antonoiu B."/>
            <person name="Zidanic M."/>
            <person name="Strong C."/>
            <person name="Sun H."/>
            <person name="Lamar B."/>
            <person name="Yordan C."/>
            <person name="Ma P."/>
            <person name="Zhong J."/>
            <person name="Preston R."/>
            <person name="Vil D."/>
            <person name="Shekher M."/>
            <person name="Matero A."/>
            <person name="Shah R."/>
            <person name="Swaby I.K."/>
            <person name="O'Shaughnessy A."/>
            <person name="Rodriguez M."/>
            <person name="Hoffman J."/>
            <person name="Till S."/>
            <person name="Granat S."/>
            <person name="Shohdy N."/>
            <person name="Hasegawa A."/>
            <person name="Hameed A."/>
            <person name="Lodhi M."/>
            <person name="Johnson A."/>
            <person name="Chen E."/>
            <person name="Marra M.A."/>
            <person name="Martienssen R."/>
            <person name="McCombie W.R."/>
        </authorList>
    </citation>
    <scope>NUCLEOTIDE SEQUENCE [LARGE SCALE GENOMIC DNA]</scope>
    <source>
        <strain>cv. Columbia</strain>
    </source>
</reference>
<reference key="2">
    <citation type="journal article" date="2017" name="Plant J.">
        <title>Araport11: a complete reannotation of the Arabidopsis thaliana reference genome.</title>
        <authorList>
            <person name="Cheng C.Y."/>
            <person name="Krishnakumar V."/>
            <person name="Chan A.P."/>
            <person name="Thibaud-Nissen F."/>
            <person name="Schobel S."/>
            <person name="Town C.D."/>
        </authorList>
    </citation>
    <scope>GENOME REANNOTATION</scope>
    <source>
        <strain>cv. Columbia</strain>
    </source>
</reference>
<reference key="3">
    <citation type="journal article" date="2004" name="Plant Physiol.">
        <title>Genome-wide reprogramming of primary and secondary metabolism, protein synthesis, cellular growth processes, and the regulatory infrastructure of Arabidopsis in response to nitrogen.</title>
        <authorList>
            <person name="Scheible W.R."/>
            <person name="Morcuende R."/>
            <person name="Czechowski T."/>
            <person name="Fritz C."/>
            <person name="Osuna D."/>
            <person name="Palacios-Rojas N."/>
            <person name="Schindelasch D."/>
            <person name="Thimm O."/>
            <person name="Udvardi M.K."/>
            <person name="Stitt M."/>
        </authorList>
    </citation>
    <scope>INDUCTION BY NITRATE</scope>
</reference>
<reference key="4">
    <citation type="journal article" date="2005" name="J. Mol. Evol.">
        <title>Evolution of NIN-like proteins in Arabidopsis, rice, and Lotus japonicus.</title>
        <authorList>
            <person name="Schauser L."/>
            <person name="Wieloch W."/>
            <person name="Stougaard J."/>
        </authorList>
    </citation>
    <scope>GENE FAMILY</scope>
    <scope>NOMENCLATURE</scope>
</reference>
<name>NLP3_ARATH</name>
<comment type="function">
    <text evidence="1">Probable transcription factor.</text>
</comment>
<comment type="subcellular location">
    <subcellularLocation>
        <location evidence="3">Nucleus</location>
    </subcellularLocation>
</comment>
<comment type="induction">
    <text evidence="6">Up-regulated by nitrate.</text>
</comment>
<feature type="chain" id="PRO_0000401488" description="Protein NLP3">
    <location>
        <begin position="1"/>
        <end position="767"/>
    </location>
</feature>
<feature type="domain" description="RWP-RK" evidence="3">
    <location>
        <begin position="482"/>
        <end position="566"/>
    </location>
</feature>
<feature type="domain" description="PB1" evidence="4">
    <location>
        <begin position="673"/>
        <end position="759"/>
    </location>
</feature>
<feature type="region of interest" description="Disordered" evidence="5">
    <location>
        <begin position="462"/>
        <end position="494"/>
    </location>
</feature>
<feature type="region of interest" description="Disordered" evidence="5">
    <location>
        <begin position="590"/>
        <end position="622"/>
    </location>
</feature>
<feature type="region of interest" description="Disordered" evidence="5">
    <location>
        <begin position="646"/>
        <end position="672"/>
    </location>
</feature>
<feature type="coiled-coil region" evidence="2">
    <location>
        <begin position="485"/>
        <end position="506"/>
    </location>
</feature>
<feature type="compositionally biased region" description="Low complexity" evidence="5">
    <location>
        <begin position="604"/>
        <end position="622"/>
    </location>
</feature>
<feature type="compositionally biased region" description="Low complexity" evidence="5">
    <location>
        <begin position="655"/>
        <end position="667"/>
    </location>
</feature>
<protein>
    <recommendedName>
        <fullName>Protein NLP3</fullName>
        <shortName>AtNLP3</shortName>
    </recommendedName>
    <alternativeName>
        <fullName>NIN-like protein 3</fullName>
    </alternativeName>
    <alternativeName>
        <fullName>Nodule inception protein-like protein 3</fullName>
    </alternativeName>
</protein>